<comment type="function">
    <text evidence="1">Catalyzes the isomerization of sedoheptulose 7-phosphate in D-glycero-D-manno-heptose 7-phosphate.</text>
</comment>
<comment type="catalytic activity">
    <reaction evidence="1">
        <text>2 D-sedoheptulose 7-phosphate = D-glycero-alpha-D-manno-heptose 7-phosphate + D-glycero-beta-D-manno-heptose 7-phosphate</text>
        <dbReference type="Rhea" id="RHEA:27489"/>
        <dbReference type="ChEBI" id="CHEBI:57483"/>
        <dbReference type="ChEBI" id="CHEBI:60203"/>
        <dbReference type="ChEBI" id="CHEBI:60204"/>
        <dbReference type="EC" id="5.3.1.28"/>
    </reaction>
</comment>
<comment type="cofactor">
    <cofactor evidence="1">
        <name>Zn(2+)</name>
        <dbReference type="ChEBI" id="CHEBI:29105"/>
    </cofactor>
    <text evidence="1">Binds 1 zinc ion per subunit.</text>
</comment>
<comment type="pathway">
    <text evidence="1">Carbohydrate biosynthesis; D-glycero-D-manno-heptose 7-phosphate biosynthesis; D-glycero-alpha-D-manno-heptose 7-phosphate and D-glycero-beta-D-manno-heptose 7-phosphate from sedoheptulose 7-phosphate: step 1/1.</text>
</comment>
<comment type="subunit">
    <text evidence="1">Homotetramer.</text>
</comment>
<comment type="subcellular location">
    <subcellularLocation>
        <location evidence="1">Cytoplasm</location>
    </subcellularLocation>
</comment>
<comment type="miscellaneous">
    <text evidence="1">The reaction produces a racemic mixture of D-glycero-alpha-D-manno-heptose 7-phosphate and D-glycero-beta-D-manno-heptose 7-phosphate.</text>
</comment>
<comment type="similarity">
    <text evidence="1">Belongs to the SIS family. GmhA subfamily.</text>
</comment>
<reference key="1">
    <citation type="journal article" date="2007" name="J. Bacteriol.">
        <title>Whole-genome analysis of the methyl tert-butyl ether-degrading beta-proteobacterium Methylibium petroleiphilum PM1.</title>
        <authorList>
            <person name="Kane S.R."/>
            <person name="Chakicherla A.Y."/>
            <person name="Chain P.S.G."/>
            <person name="Schmidt R."/>
            <person name="Shin M.W."/>
            <person name="Legler T.C."/>
            <person name="Scow K.M."/>
            <person name="Larimer F.W."/>
            <person name="Lucas S.M."/>
            <person name="Richardson P.M."/>
            <person name="Hristova K.R."/>
        </authorList>
    </citation>
    <scope>NUCLEOTIDE SEQUENCE [LARGE SCALE GENOMIC DNA]</scope>
    <source>
        <strain>ATCC BAA-1232 / LMG 22953 / PM1</strain>
    </source>
</reference>
<name>GMHA_METPP</name>
<organism>
    <name type="scientific">Methylibium petroleiphilum (strain ATCC BAA-1232 / LMG 22953 / PM1)</name>
    <dbReference type="NCBI Taxonomy" id="420662"/>
    <lineage>
        <taxon>Bacteria</taxon>
        <taxon>Pseudomonadati</taxon>
        <taxon>Pseudomonadota</taxon>
        <taxon>Betaproteobacteria</taxon>
        <taxon>Burkholderiales</taxon>
        <taxon>Sphaerotilaceae</taxon>
        <taxon>Methylibium</taxon>
    </lineage>
</organism>
<feature type="chain" id="PRO_1000009079" description="Phosphoheptose isomerase">
    <location>
        <begin position="1"/>
        <end position="200"/>
    </location>
</feature>
<feature type="domain" description="SIS" evidence="1">
    <location>
        <begin position="37"/>
        <end position="199"/>
    </location>
</feature>
<feature type="binding site" evidence="1">
    <location>
        <begin position="52"/>
        <end position="54"/>
    </location>
    <ligand>
        <name>substrate</name>
    </ligand>
</feature>
<feature type="binding site" evidence="1">
    <location>
        <position position="61"/>
    </location>
    <ligand>
        <name>Zn(2+)</name>
        <dbReference type="ChEBI" id="CHEBI:29105"/>
    </ligand>
</feature>
<feature type="binding site" evidence="1">
    <location>
        <position position="65"/>
    </location>
    <ligand>
        <name>substrate</name>
    </ligand>
</feature>
<feature type="binding site" evidence="1">
    <location>
        <position position="65"/>
    </location>
    <ligand>
        <name>Zn(2+)</name>
        <dbReference type="ChEBI" id="CHEBI:29105"/>
    </ligand>
</feature>
<feature type="binding site" evidence="1">
    <location>
        <begin position="94"/>
        <end position="95"/>
    </location>
    <ligand>
        <name>substrate</name>
    </ligand>
</feature>
<feature type="binding site" evidence="1">
    <location>
        <begin position="120"/>
        <end position="122"/>
    </location>
    <ligand>
        <name>substrate</name>
    </ligand>
</feature>
<feature type="binding site" evidence="1">
    <location>
        <position position="125"/>
    </location>
    <ligand>
        <name>substrate</name>
    </ligand>
</feature>
<feature type="binding site" evidence="1">
    <location>
        <position position="175"/>
    </location>
    <ligand>
        <name>substrate</name>
    </ligand>
</feature>
<feature type="binding site" evidence="1">
    <location>
        <position position="175"/>
    </location>
    <ligand>
        <name>Zn(2+)</name>
        <dbReference type="ChEBI" id="CHEBI:29105"/>
    </ligand>
</feature>
<feature type="binding site" evidence="1">
    <location>
        <position position="183"/>
    </location>
    <ligand>
        <name>Zn(2+)</name>
        <dbReference type="ChEBI" id="CHEBI:29105"/>
    </ligand>
</feature>
<sequence>MGMLEQRIQRHFFDSADLKNQAAEVLSKPIADAVQAVLGCITAGGKVLACGNGGSASDAQHFAAEFVGRFERERPGLAAIALNTDTSIITALGNDYDFSAIYAKQVQALGNPGDVLLAITTSGNSANVVAAVDAAHDKDMTVIALTGRGGGKLGARLTETDVHICVPHERTARIQEVHILAIHCLCDAVDVQLLGEQDLT</sequence>
<evidence type="ECO:0000255" key="1">
    <source>
        <dbReference type="HAMAP-Rule" id="MF_00067"/>
    </source>
</evidence>
<accession>A2SMC9</accession>
<keyword id="KW-0119">Carbohydrate metabolism</keyword>
<keyword id="KW-0963">Cytoplasm</keyword>
<keyword id="KW-0413">Isomerase</keyword>
<keyword id="KW-0479">Metal-binding</keyword>
<keyword id="KW-1185">Reference proteome</keyword>
<keyword id="KW-0862">Zinc</keyword>
<protein>
    <recommendedName>
        <fullName evidence="1">Phosphoheptose isomerase</fullName>
        <ecNumber evidence="1">5.3.1.28</ecNumber>
    </recommendedName>
    <alternativeName>
        <fullName evidence="1">Sedoheptulose 7-phosphate isomerase</fullName>
    </alternativeName>
</protein>
<dbReference type="EC" id="5.3.1.28" evidence="1"/>
<dbReference type="EMBL" id="CP000555">
    <property type="protein sequence ID" value="ABM96718.1"/>
    <property type="molecule type" value="Genomic_DNA"/>
</dbReference>
<dbReference type="SMR" id="A2SMC9"/>
<dbReference type="STRING" id="420662.Mpe_A3765"/>
<dbReference type="KEGG" id="mpt:Mpe_A3765"/>
<dbReference type="eggNOG" id="COG0279">
    <property type="taxonomic scope" value="Bacteria"/>
</dbReference>
<dbReference type="HOGENOM" id="CLU_080999_3_1_4"/>
<dbReference type="UniPathway" id="UPA00041">
    <property type="reaction ID" value="UER00436"/>
</dbReference>
<dbReference type="Proteomes" id="UP000000366">
    <property type="component" value="Chromosome"/>
</dbReference>
<dbReference type="GO" id="GO:0005737">
    <property type="term" value="C:cytoplasm"/>
    <property type="evidence" value="ECO:0007669"/>
    <property type="project" value="UniProtKB-SubCell"/>
</dbReference>
<dbReference type="GO" id="GO:0097367">
    <property type="term" value="F:carbohydrate derivative binding"/>
    <property type="evidence" value="ECO:0007669"/>
    <property type="project" value="InterPro"/>
</dbReference>
<dbReference type="GO" id="GO:0008968">
    <property type="term" value="F:D-sedoheptulose 7-phosphate isomerase activity"/>
    <property type="evidence" value="ECO:0007669"/>
    <property type="project" value="UniProtKB-UniRule"/>
</dbReference>
<dbReference type="GO" id="GO:0008270">
    <property type="term" value="F:zinc ion binding"/>
    <property type="evidence" value="ECO:0007669"/>
    <property type="project" value="UniProtKB-UniRule"/>
</dbReference>
<dbReference type="GO" id="GO:0005975">
    <property type="term" value="P:carbohydrate metabolic process"/>
    <property type="evidence" value="ECO:0007669"/>
    <property type="project" value="UniProtKB-UniRule"/>
</dbReference>
<dbReference type="GO" id="GO:2001061">
    <property type="term" value="P:D-glycero-D-manno-heptose 7-phosphate biosynthetic process"/>
    <property type="evidence" value="ECO:0007669"/>
    <property type="project" value="UniProtKB-UniPathway"/>
</dbReference>
<dbReference type="CDD" id="cd05006">
    <property type="entry name" value="SIS_GmhA"/>
    <property type="match status" value="1"/>
</dbReference>
<dbReference type="Gene3D" id="3.40.50.10490">
    <property type="entry name" value="Glucose-6-phosphate isomerase like protein, domain 1"/>
    <property type="match status" value="1"/>
</dbReference>
<dbReference type="HAMAP" id="MF_00067">
    <property type="entry name" value="GmhA"/>
    <property type="match status" value="1"/>
</dbReference>
<dbReference type="InterPro" id="IPR035461">
    <property type="entry name" value="GmhA/DiaA"/>
</dbReference>
<dbReference type="InterPro" id="IPR004515">
    <property type="entry name" value="Phosphoheptose_Isoase"/>
</dbReference>
<dbReference type="InterPro" id="IPR001347">
    <property type="entry name" value="SIS_dom"/>
</dbReference>
<dbReference type="InterPro" id="IPR046348">
    <property type="entry name" value="SIS_dom_sf"/>
</dbReference>
<dbReference type="InterPro" id="IPR050099">
    <property type="entry name" value="SIS_GmhA/DiaA_subfam"/>
</dbReference>
<dbReference type="NCBIfam" id="NF010546">
    <property type="entry name" value="PRK13936.1"/>
    <property type="match status" value="1"/>
</dbReference>
<dbReference type="PANTHER" id="PTHR30390:SF6">
    <property type="entry name" value="DNAA INITIATOR-ASSOCIATING PROTEIN DIAA"/>
    <property type="match status" value="1"/>
</dbReference>
<dbReference type="PANTHER" id="PTHR30390">
    <property type="entry name" value="SEDOHEPTULOSE 7-PHOSPHATE ISOMERASE / DNAA INITIATOR-ASSOCIATING FACTOR FOR REPLICATION INITIATION"/>
    <property type="match status" value="1"/>
</dbReference>
<dbReference type="Pfam" id="PF13580">
    <property type="entry name" value="SIS_2"/>
    <property type="match status" value="1"/>
</dbReference>
<dbReference type="SUPFAM" id="SSF53697">
    <property type="entry name" value="SIS domain"/>
    <property type="match status" value="1"/>
</dbReference>
<dbReference type="PROSITE" id="PS51464">
    <property type="entry name" value="SIS"/>
    <property type="match status" value="1"/>
</dbReference>
<gene>
    <name evidence="1" type="primary">gmhA</name>
    <name type="ordered locus">Mpe_A3765</name>
</gene>
<proteinExistence type="inferred from homology"/>